<name>TGT_PROMA</name>
<dbReference type="EC" id="2.4.2.29" evidence="1"/>
<dbReference type="EMBL" id="AE017126">
    <property type="protein sequence ID" value="AAP99349.1"/>
    <property type="molecule type" value="Genomic_DNA"/>
</dbReference>
<dbReference type="RefSeq" id="NP_874697.1">
    <property type="nucleotide sequence ID" value="NC_005042.1"/>
</dbReference>
<dbReference type="RefSeq" id="WP_011124458.1">
    <property type="nucleotide sequence ID" value="NC_005042.1"/>
</dbReference>
<dbReference type="SMR" id="Q7VDR5"/>
<dbReference type="STRING" id="167539.Pro_0303"/>
<dbReference type="EnsemblBacteria" id="AAP99349">
    <property type="protein sequence ID" value="AAP99349"/>
    <property type="gene ID" value="Pro_0303"/>
</dbReference>
<dbReference type="KEGG" id="pma:Pro_0303"/>
<dbReference type="PATRIC" id="fig|167539.5.peg.312"/>
<dbReference type="eggNOG" id="COG0343">
    <property type="taxonomic scope" value="Bacteria"/>
</dbReference>
<dbReference type="HOGENOM" id="CLU_022060_0_1_3"/>
<dbReference type="OrthoDB" id="9805417at2"/>
<dbReference type="UniPathway" id="UPA00392"/>
<dbReference type="Proteomes" id="UP000001420">
    <property type="component" value="Chromosome"/>
</dbReference>
<dbReference type="GO" id="GO:0005829">
    <property type="term" value="C:cytosol"/>
    <property type="evidence" value="ECO:0007669"/>
    <property type="project" value="TreeGrafter"/>
</dbReference>
<dbReference type="GO" id="GO:0046872">
    <property type="term" value="F:metal ion binding"/>
    <property type="evidence" value="ECO:0007669"/>
    <property type="project" value="UniProtKB-KW"/>
</dbReference>
<dbReference type="GO" id="GO:0008479">
    <property type="term" value="F:tRNA-guanosine(34) queuine transglycosylase activity"/>
    <property type="evidence" value="ECO:0007669"/>
    <property type="project" value="UniProtKB-UniRule"/>
</dbReference>
<dbReference type="GO" id="GO:0008616">
    <property type="term" value="P:queuosine biosynthetic process"/>
    <property type="evidence" value="ECO:0007669"/>
    <property type="project" value="UniProtKB-UniRule"/>
</dbReference>
<dbReference type="GO" id="GO:0002099">
    <property type="term" value="P:tRNA wobble guanine modification"/>
    <property type="evidence" value="ECO:0007669"/>
    <property type="project" value="TreeGrafter"/>
</dbReference>
<dbReference type="GO" id="GO:0101030">
    <property type="term" value="P:tRNA-guanine transglycosylation"/>
    <property type="evidence" value="ECO:0007669"/>
    <property type="project" value="InterPro"/>
</dbReference>
<dbReference type="Gene3D" id="3.20.20.105">
    <property type="entry name" value="Queuine tRNA-ribosyltransferase-like"/>
    <property type="match status" value="1"/>
</dbReference>
<dbReference type="HAMAP" id="MF_00168">
    <property type="entry name" value="Q_tRNA_Tgt"/>
    <property type="match status" value="1"/>
</dbReference>
<dbReference type="InterPro" id="IPR050076">
    <property type="entry name" value="ArchSynthase1/Queuine_TRR"/>
</dbReference>
<dbReference type="InterPro" id="IPR004803">
    <property type="entry name" value="TGT"/>
</dbReference>
<dbReference type="InterPro" id="IPR036511">
    <property type="entry name" value="TGT-like_sf"/>
</dbReference>
<dbReference type="InterPro" id="IPR002616">
    <property type="entry name" value="tRNA_ribo_trans-like"/>
</dbReference>
<dbReference type="NCBIfam" id="TIGR00430">
    <property type="entry name" value="Q_tRNA_tgt"/>
    <property type="match status" value="1"/>
</dbReference>
<dbReference type="NCBIfam" id="TIGR00449">
    <property type="entry name" value="tgt_general"/>
    <property type="match status" value="1"/>
</dbReference>
<dbReference type="PANTHER" id="PTHR46499">
    <property type="entry name" value="QUEUINE TRNA-RIBOSYLTRANSFERASE"/>
    <property type="match status" value="1"/>
</dbReference>
<dbReference type="PANTHER" id="PTHR46499:SF1">
    <property type="entry name" value="QUEUINE TRNA-RIBOSYLTRANSFERASE"/>
    <property type="match status" value="1"/>
</dbReference>
<dbReference type="Pfam" id="PF01702">
    <property type="entry name" value="TGT"/>
    <property type="match status" value="1"/>
</dbReference>
<dbReference type="SUPFAM" id="SSF51713">
    <property type="entry name" value="tRNA-guanine transglycosylase"/>
    <property type="match status" value="1"/>
</dbReference>
<keyword id="KW-0328">Glycosyltransferase</keyword>
<keyword id="KW-0479">Metal-binding</keyword>
<keyword id="KW-0671">Queuosine biosynthesis</keyword>
<keyword id="KW-1185">Reference proteome</keyword>
<keyword id="KW-0808">Transferase</keyword>
<keyword id="KW-0819">tRNA processing</keyword>
<keyword id="KW-0862">Zinc</keyword>
<evidence type="ECO:0000255" key="1">
    <source>
        <dbReference type="HAMAP-Rule" id="MF_00168"/>
    </source>
</evidence>
<feature type="chain" id="PRO_0000135503" description="Queuine tRNA-ribosyltransferase">
    <location>
        <begin position="1"/>
        <end position="372"/>
    </location>
</feature>
<feature type="region of interest" description="RNA binding" evidence="1">
    <location>
        <begin position="246"/>
        <end position="252"/>
    </location>
</feature>
<feature type="region of interest" description="RNA binding; important for wobble base 34 recognition" evidence="1">
    <location>
        <begin position="270"/>
        <end position="274"/>
    </location>
</feature>
<feature type="active site" description="Proton acceptor" evidence="1">
    <location>
        <position position="92"/>
    </location>
</feature>
<feature type="active site" description="Nucleophile" evidence="1">
    <location>
        <position position="265"/>
    </location>
</feature>
<feature type="binding site" evidence="1">
    <location>
        <begin position="92"/>
        <end position="96"/>
    </location>
    <ligand>
        <name>substrate</name>
    </ligand>
</feature>
<feature type="binding site" evidence="1">
    <location>
        <position position="146"/>
    </location>
    <ligand>
        <name>substrate</name>
    </ligand>
</feature>
<feature type="binding site" evidence="1">
    <location>
        <position position="188"/>
    </location>
    <ligand>
        <name>substrate</name>
    </ligand>
</feature>
<feature type="binding site" evidence="1">
    <location>
        <position position="215"/>
    </location>
    <ligand>
        <name>substrate</name>
    </ligand>
</feature>
<feature type="binding site" evidence="1">
    <location>
        <position position="303"/>
    </location>
    <ligand>
        <name>Zn(2+)</name>
        <dbReference type="ChEBI" id="CHEBI:29105"/>
    </ligand>
</feature>
<feature type="binding site" evidence="1">
    <location>
        <position position="305"/>
    </location>
    <ligand>
        <name>Zn(2+)</name>
        <dbReference type="ChEBI" id="CHEBI:29105"/>
    </ligand>
</feature>
<feature type="binding site" evidence="1">
    <location>
        <position position="308"/>
    </location>
    <ligand>
        <name>Zn(2+)</name>
        <dbReference type="ChEBI" id="CHEBI:29105"/>
    </ligand>
</feature>
<feature type="binding site" evidence="1">
    <location>
        <position position="334"/>
    </location>
    <ligand>
        <name>Zn(2+)</name>
        <dbReference type="ChEBI" id="CHEBI:29105"/>
    </ligand>
</feature>
<sequence>MFDFKVLSRSTNTAGRVGRLSTPHGILSTPQFMPVGTLGTVKGITATQLKDTNAQMILANTFHLHLQPGEAIIKESGGLHSFMSWDQPILTDSGGYQVFSLGKLNKIDDFGVSFKSPRDGSHIELTPEKAIQIQMDLGADVVMAFDQCPPYPASKVEVEEACKRTHLWLERCVATHSKEDQALFGIVQGGCFLDLREESARRVASFHLPGIAIGGVSVGEPSDQIHKIVRHVAPLLPNEVPRYLMGIGTIREMAVAVANGVDFFDCVLPTRLGRHGTALVRDERWNLRNACFRNDYQPLDTTCVCETCTNYNRAYLHHLIRNDELLGLTLLSLHNLSHLIRFSRAMAVAIEDDCFSEDFAPWQKSSIAHYTW</sequence>
<comment type="function">
    <text evidence="1">Catalyzes the base-exchange of a guanine (G) residue with the queuine precursor 7-aminomethyl-7-deazaguanine (PreQ1) at position 34 (anticodon wobble position) in tRNAs with GU(N) anticodons (tRNA-Asp, -Asn, -His and -Tyr). Catalysis occurs through a double-displacement mechanism. The nucleophile active site attacks the C1' of nucleotide 34 to detach the guanine base from the RNA, forming a covalent enzyme-RNA intermediate. The proton acceptor active site deprotonates the incoming PreQ1, allowing a nucleophilic attack on the C1' of the ribose to form the product. After dissociation, two additional enzymatic reactions on the tRNA convert PreQ1 to queuine (Q), resulting in the hypermodified nucleoside queuosine (7-(((4,5-cis-dihydroxy-2-cyclopenten-1-yl)amino)methyl)-7-deazaguanosine).</text>
</comment>
<comment type="catalytic activity">
    <reaction evidence="1">
        <text>7-aminomethyl-7-carbaguanine + guanosine(34) in tRNA = 7-aminomethyl-7-carbaguanosine(34) in tRNA + guanine</text>
        <dbReference type="Rhea" id="RHEA:24104"/>
        <dbReference type="Rhea" id="RHEA-COMP:10341"/>
        <dbReference type="Rhea" id="RHEA-COMP:10342"/>
        <dbReference type="ChEBI" id="CHEBI:16235"/>
        <dbReference type="ChEBI" id="CHEBI:58703"/>
        <dbReference type="ChEBI" id="CHEBI:74269"/>
        <dbReference type="ChEBI" id="CHEBI:82833"/>
        <dbReference type="EC" id="2.4.2.29"/>
    </reaction>
</comment>
<comment type="cofactor">
    <cofactor evidence="1">
        <name>Zn(2+)</name>
        <dbReference type="ChEBI" id="CHEBI:29105"/>
    </cofactor>
    <text evidence="1">Binds 1 zinc ion per subunit.</text>
</comment>
<comment type="pathway">
    <text evidence="1">tRNA modification; tRNA-queuosine biosynthesis.</text>
</comment>
<comment type="subunit">
    <text evidence="1">Homodimer. Within each dimer, one monomer is responsible for RNA recognition and catalysis, while the other monomer binds to the replacement base PreQ1.</text>
</comment>
<comment type="similarity">
    <text evidence="1">Belongs to the queuine tRNA-ribosyltransferase family.</text>
</comment>
<accession>Q7VDR5</accession>
<organism>
    <name type="scientific">Prochlorococcus marinus (strain SARG / CCMP1375 / SS120)</name>
    <dbReference type="NCBI Taxonomy" id="167539"/>
    <lineage>
        <taxon>Bacteria</taxon>
        <taxon>Bacillati</taxon>
        <taxon>Cyanobacteriota</taxon>
        <taxon>Cyanophyceae</taxon>
        <taxon>Synechococcales</taxon>
        <taxon>Prochlorococcaceae</taxon>
        <taxon>Prochlorococcus</taxon>
    </lineage>
</organism>
<reference key="1">
    <citation type="journal article" date="2003" name="Proc. Natl. Acad. Sci. U.S.A.">
        <title>Genome sequence of the cyanobacterium Prochlorococcus marinus SS120, a nearly minimal oxyphototrophic genome.</title>
        <authorList>
            <person name="Dufresne A."/>
            <person name="Salanoubat M."/>
            <person name="Partensky F."/>
            <person name="Artiguenave F."/>
            <person name="Axmann I.M."/>
            <person name="Barbe V."/>
            <person name="Duprat S."/>
            <person name="Galperin M.Y."/>
            <person name="Koonin E.V."/>
            <person name="Le Gall F."/>
            <person name="Makarova K.S."/>
            <person name="Ostrowski M."/>
            <person name="Oztas S."/>
            <person name="Robert C."/>
            <person name="Rogozin I.B."/>
            <person name="Scanlan D.J."/>
            <person name="Tandeau de Marsac N."/>
            <person name="Weissenbach J."/>
            <person name="Wincker P."/>
            <person name="Wolf Y.I."/>
            <person name="Hess W.R."/>
        </authorList>
    </citation>
    <scope>NUCLEOTIDE SEQUENCE [LARGE SCALE GENOMIC DNA]</scope>
    <source>
        <strain>SARG / CCMP1375 / SS120</strain>
    </source>
</reference>
<protein>
    <recommendedName>
        <fullName evidence="1">Queuine tRNA-ribosyltransferase</fullName>
        <ecNumber evidence="1">2.4.2.29</ecNumber>
    </recommendedName>
    <alternativeName>
        <fullName evidence="1">Guanine insertion enzyme</fullName>
    </alternativeName>
    <alternativeName>
        <fullName evidence="1">tRNA-guanine transglycosylase</fullName>
    </alternativeName>
</protein>
<proteinExistence type="inferred from homology"/>
<gene>
    <name evidence="1" type="primary">tgt</name>
    <name type="ordered locus">Pro_0303</name>
</gene>